<dbReference type="EMBL" id="BX571856">
    <property type="protein sequence ID" value="CAG41289.1"/>
    <property type="molecule type" value="Genomic_DNA"/>
</dbReference>
<dbReference type="RefSeq" id="WP_000542274.1">
    <property type="nucleotide sequence ID" value="NC_002952.2"/>
</dbReference>
<dbReference type="SMR" id="Q6GEL0"/>
<dbReference type="GeneID" id="98346535"/>
<dbReference type="KEGG" id="sar:SAR2308"/>
<dbReference type="HOGENOM" id="CLU_074407_2_2_9"/>
<dbReference type="Proteomes" id="UP000000596">
    <property type="component" value="Chromosome"/>
</dbReference>
<dbReference type="GO" id="GO:0022625">
    <property type="term" value="C:cytosolic large ribosomal subunit"/>
    <property type="evidence" value="ECO:0007669"/>
    <property type="project" value="TreeGrafter"/>
</dbReference>
<dbReference type="GO" id="GO:0003735">
    <property type="term" value="F:structural constituent of ribosome"/>
    <property type="evidence" value="ECO:0007669"/>
    <property type="project" value="InterPro"/>
</dbReference>
<dbReference type="GO" id="GO:0006412">
    <property type="term" value="P:translation"/>
    <property type="evidence" value="ECO:0007669"/>
    <property type="project" value="UniProtKB-UniRule"/>
</dbReference>
<dbReference type="FunFam" id="3.90.1030.10:FF:000002">
    <property type="entry name" value="50S ribosomal protein L17"/>
    <property type="match status" value="1"/>
</dbReference>
<dbReference type="Gene3D" id="3.90.1030.10">
    <property type="entry name" value="Ribosomal protein L17"/>
    <property type="match status" value="1"/>
</dbReference>
<dbReference type="HAMAP" id="MF_01368">
    <property type="entry name" value="Ribosomal_bL17"/>
    <property type="match status" value="1"/>
</dbReference>
<dbReference type="InterPro" id="IPR000456">
    <property type="entry name" value="Ribosomal_bL17"/>
</dbReference>
<dbReference type="InterPro" id="IPR047859">
    <property type="entry name" value="Ribosomal_bL17_CS"/>
</dbReference>
<dbReference type="InterPro" id="IPR036373">
    <property type="entry name" value="Ribosomal_bL17_sf"/>
</dbReference>
<dbReference type="NCBIfam" id="TIGR00059">
    <property type="entry name" value="L17"/>
    <property type="match status" value="1"/>
</dbReference>
<dbReference type="PANTHER" id="PTHR14413:SF16">
    <property type="entry name" value="LARGE RIBOSOMAL SUBUNIT PROTEIN BL17M"/>
    <property type="match status" value="1"/>
</dbReference>
<dbReference type="PANTHER" id="PTHR14413">
    <property type="entry name" value="RIBOSOMAL PROTEIN L17"/>
    <property type="match status" value="1"/>
</dbReference>
<dbReference type="Pfam" id="PF01196">
    <property type="entry name" value="Ribosomal_L17"/>
    <property type="match status" value="1"/>
</dbReference>
<dbReference type="SUPFAM" id="SSF64263">
    <property type="entry name" value="Prokaryotic ribosomal protein L17"/>
    <property type="match status" value="1"/>
</dbReference>
<dbReference type="PROSITE" id="PS01167">
    <property type="entry name" value="RIBOSOMAL_L17"/>
    <property type="match status" value="1"/>
</dbReference>
<feature type="chain" id="PRO_0000224140" description="Large ribosomal subunit protein bL17">
    <location>
        <begin position="1"/>
        <end position="122"/>
    </location>
</feature>
<sequence>MGYRKLGRTSDQRKAMLRDLATSLIISERIETTEARAKEVRSVVEKLITLGKKGDLASRRNAAKTLRNVEILNEDETTQTALQKLFGEIAERYTERQGGYTRILKQGPRRGDGAESVIIELV</sequence>
<keyword id="KW-0687">Ribonucleoprotein</keyword>
<keyword id="KW-0689">Ribosomal protein</keyword>
<organism>
    <name type="scientific">Staphylococcus aureus (strain MRSA252)</name>
    <dbReference type="NCBI Taxonomy" id="282458"/>
    <lineage>
        <taxon>Bacteria</taxon>
        <taxon>Bacillati</taxon>
        <taxon>Bacillota</taxon>
        <taxon>Bacilli</taxon>
        <taxon>Bacillales</taxon>
        <taxon>Staphylococcaceae</taxon>
        <taxon>Staphylococcus</taxon>
    </lineage>
</organism>
<proteinExistence type="inferred from homology"/>
<accession>Q6GEL0</accession>
<gene>
    <name evidence="1" type="primary">rplQ</name>
    <name type="ordered locus">SAR2308</name>
</gene>
<protein>
    <recommendedName>
        <fullName evidence="1">Large ribosomal subunit protein bL17</fullName>
    </recommendedName>
    <alternativeName>
        <fullName evidence="2">50S ribosomal protein L17</fullName>
    </alternativeName>
</protein>
<name>RL17_STAAR</name>
<comment type="subunit">
    <text evidence="1">Part of the 50S ribosomal subunit. Contacts protein L32.</text>
</comment>
<comment type="similarity">
    <text evidence="1">Belongs to the bacterial ribosomal protein bL17 family.</text>
</comment>
<evidence type="ECO:0000255" key="1">
    <source>
        <dbReference type="HAMAP-Rule" id="MF_01368"/>
    </source>
</evidence>
<evidence type="ECO:0000305" key="2"/>
<reference key="1">
    <citation type="journal article" date="2004" name="Proc. Natl. Acad. Sci. U.S.A.">
        <title>Complete genomes of two clinical Staphylococcus aureus strains: evidence for the rapid evolution of virulence and drug resistance.</title>
        <authorList>
            <person name="Holden M.T.G."/>
            <person name="Feil E.J."/>
            <person name="Lindsay J.A."/>
            <person name="Peacock S.J."/>
            <person name="Day N.P.J."/>
            <person name="Enright M.C."/>
            <person name="Foster T.J."/>
            <person name="Moore C.E."/>
            <person name="Hurst L."/>
            <person name="Atkin R."/>
            <person name="Barron A."/>
            <person name="Bason N."/>
            <person name="Bentley S.D."/>
            <person name="Chillingworth C."/>
            <person name="Chillingworth T."/>
            <person name="Churcher C."/>
            <person name="Clark L."/>
            <person name="Corton C."/>
            <person name="Cronin A."/>
            <person name="Doggett J."/>
            <person name="Dowd L."/>
            <person name="Feltwell T."/>
            <person name="Hance Z."/>
            <person name="Harris B."/>
            <person name="Hauser H."/>
            <person name="Holroyd S."/>
            <person name="Jagels K."/>
            <person name="James K.D."/>
            <person name="Lennard N."/>
            <person name="Line A."/>
            <person name="Mayes R."/>
            <person name="Moule S."/>
            <person name="Mungall K."/>
            <person name="Ormond D."/>
            <person name="Quail M.A."/>
            <person name="Rabbinowitsch E."/>
            <person name="Rutherford K.M."/>
            <person name="Sanders M."/>
            <person name="Sharp S."/>
            <person name="Simmonds M."/>
            <person name="Stevens K."/>
            <person name="Whitehead S."/>
            <person name="Barrell B.G."/>
            <person name="Spratt B.G."/>
            <person name="Parkhill J."/>
        </authorList>
    </citation>
    <scope>NUCLEOTIDE SEQUENCE [LARGE SCALE GENOMIC DNA]</scope>
    <source>
        <strain>MRSA252</strain>
    </source>
</reference>